<sequence length="250" mass="29890">MKYNNHDKIRDFIIIEAYMFRFKKKVKPEVDMTIKEFILLTYLFHQQENTLPFKKIVSDLCYKQSDLVQHIKVLVKHSYISKVRSKIDERNTYISISEEQREKIAERVTLFDQIIKQFNLADQSESQMIPKDSKEFLNLMMYTMYFKNIIKKHLTLSFVEFTILAIITSQNKNIVLLKDLIETIHHKYPQTVRALNNLKKQGYLIKERSTEDERKILIHMDDAQQDHAEQLLAQVNQLLADKDHLHLVFE</sequence>
<name>SARS_STAAM</name>
<accession>Q7A2Y8</accession>
<comment type="function">
    <text evidence="1">Transcriptional regulator that controls expression of some virulence factors in a cell density-dependent manner.</text>
</comment>
<comment type="subcellular location">
    <subcellularLocation>
        <location evidence="1">Cytoplasm</location>
    </subcellularLocation>
</comment>
<comment type="similarity">
    <text evidence="3">Belongs to the SarA family.</text>
</comment>
<organism>
    <name type="scientific">Staphylococcus aureus (strain Mu50 / ATCC 700699)</name>
    <dbReference type="NCBI Taxonomy" id="158878"/>
    <lineage>
        <taxon>Bacteria</taxon>
        <taxon>Bacillati</taxon>
        <taxon>Bacillota</taxon>
        <taxon>Bacilli</taxon>
        <taxon>Bacillales</taxon>
        <taxon>Staphylococcaceae</taxon>
        <taxon>Staphylococcus</taxon>
    </lineage>
</organism>
<keyword id="KW-0010">Activator</keyword>
<keyword id="KW-0963">Cytoplasm</keyword>
<keyword id="KW-0238">DNA-binding</keyword>
<keyword id="KW-0677">Repeat</keyword>
<keyword id="KW-0678">Repressor</keyword>
<keyword id="KW-0804">Transcription</keyword>
<keyword id="KW-0805">Transcription regulation</keyword>
<keyword id="KW-0843">Virulence</keyword>
<reference key="1">
    <citation type="journal article" date="2001" name="Lancet">
        <title>Whole genome sequencing of meticillin-resistant Staphylococcus aureus.</title>
        <authorList>
            <person name="Kuroda M."/>
            <person name="Ohta T."/>
            <person name="Uchiyama I."/>
            <person name="Baba T."/>
            <person name="Yuzawa H."/>
            <person name="Kobayashi I."/>
            <person name="Cui L."/>
            <person name="Oguchi A."/>
            <person name="Aoki K."/>
            <person name="Nagai Y."/>
            <person name="Lian J.-Q."/>
            <person name="Ito T."/>
            <person name="Kanamori M."/>
            <person name="Matsumaru H."/>
            <person name="Maruyama A."/>
            <person name="Murakami H."/>
            <person name="Hosoyama A."/>
            <person name="Mizutani-Ui Y."/>
            <person name="Takahashi N.K."/>
            <person name="Sawano T."/>
            <person name="Inoue R."/>
            <person name="Kaito C."/>
            <person name="Sekimizu K."/>
            <person name="Hirakawa H."/>
            <person name="Kuhara S."/>
            <person name="Goto S."/>
            <person name="Yabuzaki J."/>
            <person name="Kanehisa M."/>
            <person name="Yamashita A."/>
            <person name="Oshima K."/>
            <person name="Furuya K."/>
            <person name="Yoshino C."/>
            <person name="Shiba T."/>
            <person name="Hattori M."/>
            <person name="Ogasawara N."/>
            <person name="Hayashi H."/>
            <person name="Hiramatsu K."/>
        </authorList>
    </citation>
    <scope>NUCLEOTIDE SEQUENCE [LARGE SCALE GENOMIC DNA]</scope>
    <source>
        <strain>Mu50 / ATCC 700699</strain>
    </source>
</reference>
<feature type="chain" id="PRO_0000219592" description="HTH-type transcriptional regulator SarS">
    <location>
        <begin position="1"/>
        <end position="250"/>
    </location>
</feature>
<feature type="DNA-binding region" description="H-T-H motif" evidence="2">
    <location>
        <begin position="53"/>
        <end position="76"/>
    </location>
</feature>
<feature type="DNA-binding region" description="H-T-H motif" evidence="2">
    <location>
        <begin position="177"/>
        <end position="200"/>
    </location>
</feature>
<protein>
    <recommendedName>
        <fullName>HTH-type transcriptional regulator SarS</fullName>
    </recommendedName>
    <alternativeName>
        <fullName>Staphylococcal accessory regulator S</fullName>
    </alternativeName>
</protein>
<proteinExistence type="inferred from homology"/>
<evidence type="ECO:0000250" key="1"/>
<evidence type="ECO:0000255" key="2"/>
<evidence type="ECO:0000305" key="3"/>
<gene>
    <name type="primary">sarS</name>
    <name type="synonym">sarH1</name>
    <name type="ordered locus">SAV0112</name>
</gene>
<dbReference type="EMBL" id="BA000017">
    <property type="protein sequence ID" value="BAB56274.1"/>
    <property type="molecule type" value="Genomic_DNA"/>
</dbReference>
<dbReference type="RefSeq" id="WP_000876756.1">
    <property type="nucleotide sequence ID" value="NC_002758.2"/>
</dbReference>
<dbReference type="SMR" id="Q7A2Y8"/>
<dbReference type="KEGG" id="sav:SAV0112"/>
<dbReference type="HOGENOM" id="CLU_097164_0_0_9"/>
<dbReference type="Proteomes" id="UP000002481">
    <property type="component" value="Chromosome"/>
</dbReference>
<dbReference type="GO" id="GO:0005737">
    <property type="term" value="C:cytoplasm"/>
    <property type="evidence" value="ECO:0007669"/>
    <property type="project" value="UniProtKB-SubCell"/>
</dbReference>
<dbReference type="GO" id="GO:0003677">
    <property type="term" value="F:DNA binding"/>
    <property type="evidence" value="ECO:0007669"/>
    <property type="project" value="UniProtKB-KW"/>
</dbReference>
<dbReference type="GO" id="GO:0003700">
    <property type="term" value="F:DNA-binding transcription factor activity"/>
    <property type="evidence" value="ECO:0007669"/>
    <property type="project" value="InterPro"/>
</dbReference>
<dbReference type="GO" id="GO:0006950">
    <property type="term" value="P:response to stress"/>
    <property type="evidence" value="ECO:0007669"/>
    <property type="project" value="TreeGrafter"/>
</dbReference>
<dbReference type="Gene3D" id="1.10.10.10">
    <property type="entry name" value="Winged helix-like DNA-binding domain superfamily/Winged helix DNA-binding domain"/>
    <property type="match status" value="2"/>
</dbReference>
<dbReference type="InterPro" id="IPR000835">
    <property type="entry name" value="HTH_MarR-typ"/>
</dbReference>
<dbReference type="InterPro" id="IPR039422">
    <property type="entry name" value="MarR/SlyA-like"/>
</dbReference>
<dbReference type="InterPro" id="IPR010166">
    <property type="entry name" value="SarA/Rot_dom"/>
</dbReference>
<dbReference type="InterPro" id="IPR055166">
    <property type="entry name" value="Transc_reg_Sar_Rot_HTH"/>
</dbReference>
<dbReference type="InterPro" id="IPR036388">
    <property type="entry name" value="WH-like_DNA-bd_sf"/>
</dbReference>
<dbReference type="InterPro" id="IPR036390">
    <property type="entry name" value="WH_DNA-bd_sf"/>
</dbReference>
<dbReference type="NCBIfam" id="TIGR01889">
    <property type="entry name" value="Staph_reg_Sar"/>
    <property type="match status" value="2"/>
</dbReference>
<dbReference type="PANTHER" id="PTHR33164:SF5">
    <property type="entry name" value="ORGANIC HYDROPEROXIDE RESISTANCE TRANSCRIPTIONAL REGULATOR"/>
    <property type="match status" value="1"/>
</dbReference>
<dbReference type="PANTHER" id="PTHR33164">
    <property type="entry name" value="TRANSCRIPTIONAL REGULATOR, MARR FAMILY"/>
    <property type="match status" value="1"/>
</dbReference>
<dbReference type="Pfam" id="PF22381">
    <property type="entry name" value="Staph_reg_Sar_Rot"/>
    <property type="match status" value="2"/>
</dbReference>
<dbReference type="SMART" id="SM00347">
    <property type="entry name" value="HTH_MARR"/>
    <property type="match status" value="2"/>
</dbReference>
<dbReference type="SUPFAM" id="SSF46785">
    <property type="entry name" value="Winged helix' DNA-binding domain"/>
    <property type="match status" value="2"/>
</dbReference>